<feature type="chain" id="PRO_1000078318" description="Sec-independent protein translocase protein TatA">
    <location>
        <begin position="1"/>
        <end position="100"/>
    </location>
</feature>
<feature type="transmembrane region" description="Helical" evidence="1">
    <location>
        <begin position="1"/>
        <end position="21"/>
    </location>
</feature>
<feature type="region of interest" description="Disordered" evidence="2">
    <location>
        <begin position="46"/>
        <end position="100"/>
    </location>
</feature>
<feature type="compositionally biased region" description="Basic and acidic residues" evidence="2">
    <location>
        <begin position="46"/>
        <end position="58"/>
    </location>
</feature>
<feature type="compositionally biased region" description="Low complexity" evidence="2">
    <location>
        <begin position="69"/>
        <end position="78"/>
    </location>
</feature>
<accession>A4X752</accession>
<comment type="function">
    <text evidence="1">Part of the twin-arginine translocation (Tat) system that transports large folded proteins containing a characteristic twin-arginine motif in their signal peptide across membranes. TatA could form the protein-conducting channel of the Tat system.</text>
</comment>
<comment type="subunit">
    <text evidence="1">The Tat system comprises two distinct complexes: a TatABC complex, containing multiple copies of TatA, TatB and TatC subunits, and a separate TatA complex, containing only TatA subunits. Substrates initially bind to the TatABC complex, which probably triggers association of the separate TatA complex to form the active translocon.</text>
</comment>
<comment type="subcellular location">
    <subcellularLocation>
        <location evidence="1">Cell membrane</location>
        <topology evidence="1">Single-pass membrane protein</topology>
    </subcellularLocation>
</comment>
<comment type="similarity">
    <text evidence="1">Belongs to the TatA/E family.</text>
</comment>
<protein>
    <recommendedName>
        <fullName evidence="1">Sec-independent protein translocase protein TatA</fullName>
    </recommendedName>
</protein>
<organism>
    <name type="scientific">Salinispora tropica (strain ATCC BAA-916 / DSM 44818 / JCM 13857 / NBRC 105044 / CNB-440)</name>
    <dbReference type="NCBI Taxonomy" id="369723"/>
    <lineage>
        <taxon>Bacteria</taxon>
        <taxon>Bacillati</taxon>
        <taxon>Actinomycetota</taxon>
        <taxon>Actinomycetes</taxon>
        <taxon>Micromonosporales</taxon>
        <taxon>Micromonosporaceae</taxon>
        <taxon>Salinispora</taxon>
    </lineage>
</organism>
<dbReference type="EMBL" id="CP000667">
    <property type="protein sequence ID" value="ABP54702.1"/>
    <property type="molecule type" value="Genomic_DNA"/>
</dbReference>
<dbReference type="RefSeq" id="WP_012013483.1">
    <property type="nucleotide sequence ID" value="NC_009380.1"/>
</dbReference>
<dbReference type="SMR" id="A4X752"/>
<dbReference type="STRING" id="369723.Strop_2252"/>
<dbReference type="KEGG" id="stp:Strop_2252"/>
<dbReference type="PATRIC" id="fig|369723.5.peg.2311"/>
<dbReference type="eggNOG" id="COG1826">
    <property type="taxonomic scope" value="Bacteria"/>
</dbReference>
<dbReference type="HOGENOM" id="CLU_086034_4_0_11"/>
<dbReference type="Proteomes" id="UP000000235">
    <property type="component" value="Chromosome"/>
</dbReference>
<dbReference type="GO" id="GO:0033281">
    <property type="term" value="C:TAT protein transport complex"/>
    <property type="evidence" value="ECO:0007669"/>
    <property type="project" value="UniProtKB-UniRule"/>
</dbReference>
<dbReference type="GO" id="GO:0008320">
    <property type="term" value="F:protein transmembrane transporter activity"/>
    <property type="evidence" value="ECO:0007669"/>
    <property type="project" value="UniProtKB-UniRule"/>
</dbReference>
<dbReference type="GO" id="GO:0043953">
    <property type="term" value="P:protein transport by the Tat complex"/>
    <property type="evidence" value="ECO:0007669"/>
    <property type="project" value="UniProtKB-UniRule"/>
</dbReference>
<dbReference type="Gene3D" id="1.20.5.3310">
    <property type="match status" value="1"/>
</dbReference>
<dbReference type="HAMAP" id="MF_00236">
    <property type="entry name" value="TatA_E"/>
    <property type="match status" value="1"/>
</dbReference>
<dbReference type="InterPro" id="IPR003369">
    <property type="entry name" value="TatA/B/E"/>
</dbReference>
<dbReference type="InterPro" id="IPR006312">
    <property type="entry name" value="TatA/E"/>
</dbReference>
<dbReference type="NCBIfam" id="NF001854">
    <property type="entry name" value="PRK00575.1"/>
    <property type="match status" value="1"/>
</dbReference>
<dbReference type="PANTHER" id="PTHR42982">
    <property type="entry name" value="SEC-INDEPENDENT PROTEIN TRANSLOCASE PROTEIN TATA"/>
    <property type="match status" value="1"/>
</dbReference>
<dbReference type="PANTHER" id="PTHR42982:SF8">
    <property type="entry name" value="SEC-INDEPENDENT PROTEIN TRANSLOCASE PROTEIN TATA"/>
    <property type="match status" value="1"/>
</dbReference>
<dbReference type="Pfam" id="PF02416">
    <property type="entry name" value="TatA_B_E"/>
    <property type="match status" value="1"/>
</dbReference>
<sequence length="100" mass="11078">MGALRPWHIAVLVVVLILLFGAKRLPDAARSLGRSLRIIKAETKSLHDDDRDLAEKADAQAGYQPMPPQVQQGQHPQQSPYPAPPQQQPVVDPVQRTRDS</sequence>
<evidence type="ECO:0000255" key="1">
    <source>
        <dbReference type="HAMAP-Rule" id="MF_00236"/>
    </source>
</evidence>
<evidence type="ECO:0000256" key="2">
    <source>
        <dbReference type="SAM" id="MobiDB-lite"/>
    </source>
</evidence>
<name>TATA_SALTO</name>
<gene>
    <name evidence="1" type="primary">tatA</name>
    <name type="ordered locus">Strop_2252</name>
</gene>
<reference key="1">
    <citation type="journal article" date="2007" name="Proc. Natl. Acad. Sci. U.S.A.">
        <title>Genome sequencing reveals complex secondary metabolome in the marine actinomycete Salinispora tropica.</title>
        <authorList>
            <person name="Udwary D.W."/>
            <person name="Zeigler L."/>
            <person name="Asolkar R.N."/>
            <person name="Singan V."/>
            <person name="Lapidus A."/>
            <person name="Fenical W."/>
            <person name="Jensen P.R."/>
            <person name="Moore B.S."/>
        </authorList>
    </citation>
    <scope>NUCLEOTIDE SEQUENCE [LARGE SCALE GENOMIC DNA]</scope>
    <source>
        <strain>ATCC BAA-916 / DSM 44818 / JCM 13857 / NBRC 105044 / CNB-440</strain>
    </source>
</reference>
<proteinExistence type="inferred from homology"/>
<keyword id="KW-1003">Cell membrane</keyword>
<keyword id="KW-0472">Membrane</keyword>
<keyword id="KW-0653">Protein transport</keyword>
<keyword id="KW-1185">Reference proteome</keyword>
<keyword id="KW-0811">Translocation</keyword>
<keyword id="KW-0812">Transmembrane</keyword>
<keyword id="KW-1133">Transmembrane helix</keyword>
<keyword id="KW-0813">Transport</keyword>